<evidence type="ECO:0000250" key="1">
    <source>
        <dbReference type="UniProtKB" id="Q6Z784"/>
    </source>
</evidence>
<evidence type="ECO:0000255" key="2">
    <source>
        <dbReference type="PROSITE-ProRule" id="PRU00714"/>
    </source>
</evidence>
<evidence type="ECO:0000256" key="3">
    <source>
        <dbReference type="SAM" id="MobiDB-lite"/>
    </source>
</evidence>
<evidence type="ECO:0000312" key="4">
    <source>
        <dbReference type="EMBL" id="EAY84914.1"/>
    </source>
</evidence>
<evidence type="ECO:0007829" key="5">
    <source>
        <dbReference type="PDB" id="7D3Y"/>
    </source>
</evidence>
<organism>
    <name type="scientific">Oryza sativa subsp. indica</name>
    <name type="common">Rice</name>
    <dbReference type="NCBI Taxonomy" id="39946"/>
    <lineage>
        <taxon>Eukaryota</taxon>
        <taxon>Viridiplantae</taxon>
        <taxon>Streptophyta</taxon>
        <taxon>Embryophyta</taxon>
        <taxon>Tracheophyta</taxon>
        <taxon>Spermatophyta</taxon>
        <taxon>Magnoliopsida</taxon>
        <taxon>Liliopsida</taxon>
        <taxon>Poales</taxon>
        <taxon>Poaceae</taxon>
        <taxon>BOP clade</taxon>
        <taxon>Oryzoideae</taxon>
        <taxon>Oryzeae</taxon>
        <taxon>Oryzinae</taxon>
        <taxon>Oryza</taxon>
        <taxon>Oryza sativa</taxon>
    </lineage>
</organism>
<dbReference type="EMBL" id="CM000127">
    <property type="protein sequence ID" value="EAY84914.1"/>
    <property type="molecule type" value="Genomic_DNA"/>
</dbReference>
<dbReference type="PDB" id="7D3Y">
    <property type="method" value="X-ray"/>
    <property type="resolution" value="3.11 A"/>
    <property type="chains" value="A/B=1-202"/>
</dbReference>
<dbReference type="PDBsum" id="7D3Y"/>
<dbReference type="SMR" id="A2X254"/>
<dbReference type="STRING" id="39946.A2X254"/>
<dbReference type="EnsemblPlants" id="BGIOSGA007749-TA">
    <property type="protein sequence ID" value="BGIOSGA007749-PA"/>
    <property type="gene ID" value="BGIOSGA007749"/>
</dbReference>
<dbReference type="EnsemblPlants" id="OsIR64_02g0007660.01">
    <property type="protein sequence ID" value="OsIR64_02g0007660.01"/>
    <property type="gene ID" value="OsIR64_02g0007660"/>
</dbReference>
<dbReference type="EnsemblPlants" id="OsLaMu_02g0007730.01">
    <property type="protein sequence ID" value="OsLaMu_02g0007730.01"/>
    <property type="gene ID" value="OsLaMu_02g0007730"/>
</dbReference>
<dbReference type="EnsemblPlants" id="OsPr106_02g0007720.01">
    <property type="protein sequence ID" value="OsPr106_02g0007720.01"/>
    <property type="gene ID" value="OsPr106_02g0007720"/>
</dbReference>
<dbReference type="EnsemblPlants" id="OsZS97_02G007590_01">
    <property type="protein sequence ID" value="OsZS97_02G007590_01"/>
    <property type="gene ID" value="OsZS97_02G007590"/>
</dbReference>
<dbReference type="Gramene" id="BGIOSGA007749-TA">
    <property type="protein sequence ID" value="BGIOSGA007749-PA"/>
    <property type="gene ID" value="BGIOSGA007749"/>
</dbReference>
<dbReference type="Gramene" id="OsIR64_02g0007660.01">
    <property type="protein sequence ID" value="OsIR64_02g0007660.01"/>
    <property type="gene ID" value="OsIR64_02g0007660"/>
</dbReference>
<dbReference type="Gramene" id="OsLaMu_02g0007730.01">
    <property type="protein sequence ID" value="OsLaMu_02g0007730.01"/>
    <property type="gene ID" value="OsLaMu_02g0007730"/>
</dbReference>
<dbReference type="Gramene" id="OsPr106_02g0007720.01">
    <property type="protein sequence ID" value="OsPr106_02g0007720.01"/>
    <property type="gene ID" value="OsPr106_02g0007720"/>
</dbReference>
<dbReference type="Gramene" id="OsZS97_02G007590_01">
    <property type="protein sequence ID" value="OsZS97_02G007590_01"/>
    <property type="gene ID" value="OsZS97_02G007590"/>
</dbReference>
<dbReference type="HOGENOM" id="CLU_057600_1_1_1"/>
<dbReference type="OMA" id="EHYSSIN"/>
<dbReference type="Proteomes" id="UP000007015">
    <property type="component" value="Chromosome 2"/>
</dbReference>
<dbReference type="GO" id="GO:0005634">
    <property type="term" value="C:nucleus"/>
    <property type="evidence" value="ECO:0007669"/>
    <property type="project" value="UniProtKB-SubCell"/>
</dbReference>
<dbReference type="GO" id="GO:0070417">
    <property type="term" value="P:cellular response to cold"/>
    <property type="evidence" value="ECO:0007669"/>
    <property type="project" value="EnsemblPlants"/>
</dbReference>
<dbReference type="GO" id="GO:0016036">
    <property type="term" value="P:cellular response to phosphate starvation"/>
    <property type="evidence" value="ECO:0007669"/>
    <property type="project" value="EnsemblPlants"/>
</dbReference>
<dbReference type="GO" id="GO:0051511">
    <property type="term" value="P:negative regulation of unidimensional cell growth"/>
    <property type="evidence" value="ECO:0007669"/>
    <property type="project" value="EnsemblPlants"/>
</dbReference>
<dbReference type="GO" id="GO:2000024">
    <property type="term" value="P:regulation of leaf development"/>
    <property type="evidence" value="ECO:0007669"/>
    <property type="project" value="EnsemblPlants"/>
</dbReference>
<dbReference type="CDD" id="cd14481">
    <property type="entry name" value="SPX_AtSPX1_like"/>
    <property type="match status" value="1"/>
</dbReference>
<dbReference type="InterPro" id="IPR004331">
    <property type="entry name" value="SPX_dom"/>
</dbReference>
<dbReference type="InterPro" id="IPR031142">
    <property type="entry name" value="SPX_prot"/>
</dbReference>
<dbReference type="PANTHER" id="PTHR45978:SF5">
    <property type="entry name" value="SPX DOMAIN-CONTAINING PROTEIN 2"/>
    <property type="match status" value="1"/>
</dbReference>
<dbReference type="PANTHER" id="PTHR45978">
    <property type="entry name" value="SPX DOMAIN-CONTAINING PROTEIN 3"/>
    <property type="match status" value="1"/>
</dbReference>
<dbReference type="Pfam" id="PF03105">
    <property type="entry name" value="SPX"/>
    <property type="match status" value="2"/>
</dbReference>
<dbReference type="PROSITE" id="PS51382">
    <property type="entry name" value="SPX"/>
    <property type="match status" value="1"/>
</dbReference>
<feature type="chain" id="PRO_0000398348" description="SPX domain-containing protein 2">
    <location>
        <begin position="1"/>
        <end position="278"/>
    </location>
</feature>
<feature type="domain" description="SPX" evidence="2">
    <location>
        <begin position="1"/>
        <end position="162"/>
    </location>
</feature>
<feature type="region of interest" description="Disordered" evidence="3">
    <location>
        <begin position="191"/>
        <end position="242"/>
    </location>
</feature>
<feature type="region of interest" description="Disordered" evidence="3">
    <location>
        <begin position="255"/>
        <end position="278"/>
    </location>
</feature>
<feature type="helix" evidence="5">
    <location>
        <begin position="3"/>
        <end position="12"/>
    </location>
</feature>
<feature type="turn" evidence="5">
    <location>
        <begin position="16"/>
        <end position="20"/>
    </location>
</feature>
<feature type="helix" evidence="5">
    <location>
        <begin position="27"/>
        <end position="33"/>
    </location>
</feature>
<feature type="helix" evidence="5">
    <location>
        <begin position="68"/>
        <end position="152"/>
    </location>
</feature>
<feature type="helix" evidence="5">
    <location>
        <begin position="157"/>
        <end position="165"/>
    </location>
</feature>
<feature type="turn" evidence="5">
    <location>
        <begin position="168"/>
        <end position="170"/>
    </location>
</feature>
<feature type="helix" evidence="5">
    <location>
        <begin position="173"/>
        <end position="189"/>
    </location>
</feature>
<reference key="1">
    <citation type="journal article" date="2005" name="PLoS Biol.">
        <title>The genomes of Oryza sativa: a history of duplications.</title>
        <authorList>
            <person name="Yu J."/>
            <person name="Wang J."/>
            <person name="Lin W."/>
            <person name="Li S."/>
            <person name="Li H."/>
            <person name="Zhou J."/>
            <person name="Ni P."/>
            <person name="Dong W."/>
            <person name="Hu S."/>
            <person name="Zeng C."/>
            <person name="Zhang J."/>
            <person name="Zhang Y."/>
            <person name="Li R."/>
            <person name="Xu Z."/>
            <person name="Li S."/>
            <person name="Li X."/>
            <person name="Zheng H."/>
            <person name="Cong L."/>
            <person name="Lin L."/>
            <person name="Yin J."/>
            <person name="Geng J."/>
            <person name="Li G."/>
            <person name="Shi J."/>
            <person name="Liu J."/>
            <person name="Lv H."/>
            <person name="Li J."/>
            <person name="Wang J."/>
            <person name="Deng Y."/>
            <person name="Ran L."/>
            <person name="Shi X."/>
            <person name="Wang X."/>
            <person name="Wu Q."/>
            <person name="Li C."/>
            <person name="Ren X."/>
            <person name="Wang J."/>
            <person name="Wang X."/>
            <person name="Li D."/>
            <person name="Liu D."/>
            <person name="Zhang X."/>
            <person name="Ji Z."/>
            <person name="Zhao W."/>
            <person name="Sun Y."/>
            <person name="Zhang Z."/>
            <person name="Bao J."/>
            <person name="Han Y."/>
            <person name="Dong L."/>
            <person name="Ji J."/>
            <person name="Chen P."/>
            <person name="Wu S."/>
            <person name="Liu J."/>
            <person name="Xiao Y."/>
            <person name="Bu D."/>
            <person name="Tan J."/>
            <person name="Yang L."/>
            <person name="Ye C."/>
            <person name="Zhang J."/>
            <person name="Xu J."/>
            <person name="Zhou Y."/>
            <person name="Yu Y."/>
            <person name="Zhang B."/>
            <person name="Zhuang S."/>
            <person name="Wei H."/>
            <person name="Liu B."/>
            <person name="Lei M."/>
            <person name="Yu H."/>
            <person name="Li Y."/>
            <person name="Xu H."/>
            <person name="Wei S."/>
            <person name="He X."/>
            <person name="Fang L."/>
            <person name="Zhang Z."/>
            <person name="Zhang Y."/>
            <person name="Huang X."/>
            <person name="Su Z."/>
            <person name="Tong W."/>
            <person name="Li J."/>
            <person name="Tong Z."/>
            <person name="Li S."/>
            <person name="Ye J."/>
            <person name="Wang L."/>
            <person name="Fang L."/>
            <person name="Lei T."/>
            <person name="Chen C.-S."/>
            <person name="Chen H.-C."/>
            <person name="Xu Z."/>
            <person name="Li H."/>
            <person name="Huang H."/>
            <person name="Zhang F."/>
            <person name="Xu H."/>
            <person name="Li N."/>
            <person name="Zhao C."/>
            <person name="Li S."/>
            <person name="Dong L."/>
            <person name="Huang Y."/>
            <person name="Li L."/>
            <person name="Xi Y."/>
            <person name="Qi Q."/>
            <person name="Li W."/>
            <person name="Zhang B."/>
            <person name="Hu W."/>
            <person name="Zhang Y."/>
            <person name="Tian X."/>
            <person name="Jiao Y."/>
            <person name="Liang X."/>
            <person name="Jin J."/>
            <person name="Gao L."/>
            <person name="Zheng W."/>
            <person name="Hao B."/>
            <person name="Liu S.-M."/>
            <person name="Wang W."/>
            <person name="Yuan L."/>
            <person name="Cao M."/>
            <person name="McDermott J."/>
            <person name="Samudrala R."/>
            <person name="Wang J."/>
            <person name="Wong G.K.-S."/>
            <person name="Yang H."/>
        </authorList>
    </citation>
    <scope>NUCLEOTIDE SEQUENCE [LARGE SCALE GENOMIC DNA]</scope>
    <source>
        <strain>cv. 93-11</strain>
    </source>
</reference>
<proteinExistence type="evidence at protein level"/>
<comment type="function">
    <text evidence="1">Inhibits PHR2 DNA-binding activity via a phosphate (Pi)-dependent protein interaction (By similarity). Together with SPX1, plays a negative role in the regulation of leaf inclination by preventing RLI1 transcription factor activity in Pi depleted conditions (By similarity).</text>
</comment>
<comment type="subunit">
    <text evidence="1">Interacts (via SPX domain) with PHR2 (via C-terminus) (By similarity). Interacts with RLI1 in the nucleus to prevents its positive regulation of leaf inclination during phosphate (Pi) starvation (By similarity).</text>
</comment>
<comment type="subcellular location">
    <subcellularLocation>
        <location evidence="1">Nucleus</location>
    </subcellularLocation>
</comment>
<comment type="domain">
    <text evidence="1">The SPX domain is sufficient for inhibition of PHR2 binding to DNA.</text>
</comment>
<gene>
    <name evidence="1" type="primary">SPX2</name>
    <name evidence="4" type="ORF">OsI_06282</name>
</gene>
<keyword id="KW-0002">3D-structure</keyword>
<keyword id="KW-0539">Nucleus</keyword>
<keyword id="KW-1185">Reference proteome</keyword>
<sequence>MKFGKSLSSQIVEMQPEWRDNFLSYKDLKKRLNLISGGAAGERASKRRRVGGATAVTVTAAAAGGMTLEQAGFVGLLDAELDKFNFFFLEKEEEYVIKQKELRERKMASAEEVMRVRKEIVDLHGEMVLLENYSALNYTGLVKILKKYDKRTGSMIRLPFVQKVLQQPFFTTDLLYKLVKECEEMLDQLMPTNEHSVASEDGKDDSEGEEKGSKPSSSSSANGGAVPGEAEDERSTDMKSTVTAALRALREIRSGSSTVSVFSLPPLHGSNGQDEPGR</sequence>
<accession>A2X254</accession>
<protein>
    <recommendedName>
        <fullName evidence="1">SPX domain-containing protein 2</fullName>
    </recommendedName>
    <alternativeName>
        <fullName evidence="1">Protein SPX DOMAIN GENE 2</fullName>
        <shortName evidence="1">OsSPX2</shortName>
    </alternativeName>
</protein>
<name>SPX2_ORYSI</name>